<dbReference type="EC" id="3.1.21.10" evidence="1"/>
<dbReference type="EMBL" id="CP001616">
    <property type="protein sequence ID" value="ACQ94306.1"/>
    <property type="molecule type" value="Genomic_DNA"/>
</dbReference>
<dbReference type="RefSeq" id="WP_015879755.1">
    <property type="nucleotide sequence ID" value="NC_012691.1"/>
</dbReference>
<dbReference type="SMR" id="C4LBN2"/>
<dbReference type="STRING" id="595494.Tola_2713"/>
<dbReference type="KEGG" id="tau:Tola_2713"/>
<dbReference type="eggNOG" id="COG0817">
    <property type="taxonomic scope" value="Bacteria"/>
</dbReference>
<dbReference type="HOGENOM" id="CLU_091257_2_1_6"/>
<dbReference type="OrthoDB" id="9805499at2"/>
<dbReference type="Proteomes" id="UP000009073">
    <property type="component" value="Chromosome"/>
</dbReference>
<dbReference type="GO" id="GO:0005737">
    <property type="term" value="C:cytoplasm"/>
    <property type="evidence" value="ECO:0007669"/>
    <property type="project" value="UniProtKB-SubCell"/>
</dbReference>
<dbReference type="GO" id="GO:0048476">
    <property type="term" value="C:Holliday junction resolvase complex"/>
    <property type="evidence" value="ECO:0007669"/>
    <property type="project" value="UniProtKB-UniRule"/>
</dbReference>
<dbReference type="GO" id="GO:0008821">
    <property type="term" value="F:crossover junction DNA endonuclease activity"/>
    <property type="evidence" value="ECO:0007669"/>
    <property type="project" value="UniProtKB-UniRule"/>
</dbReference>
<dbReference type="GO" id="GO:0003677">
    <property type="term" value="F:DNA binding"/>
    <property type="evidence" value="ECO:0007669"/>
    <property type="project" value="UniProtKB-KW"/>
</dbReference>
<dbReference type="GO" id="GO:0000287">
    <property type="term" value="F:magnesium ion binding"/>
    <property type="evidence" value="ECO:0007669"/>
    <property type="project" value="UniProtKB-UniRule"/>
</dbReference>
<dbReference type="GO" id="GO:0006310">
    <property type="term" value="P:DNA recombination"/>
    <property type="evidence" value="ECO:0007669"/>
    <property type="project" value="UniProtKB-UniRule"/>
</dbReference>
<dbReference type="GO" id="GO:0006281">
    <property type="term" value="P:DNA repair"/>
    <property type="evidence" value="ECO:0007669"/>
    <property type="project" value="UniProtKB-UniRule"/>
</dbReference>
<dbReference type="CDD" id="cd16962">
    <property type="entry name" value="RuvC"/>
    <property type="match status" value="1"/>
</dbReference>
<dbReference type="FunFam" id="3.30.420.10:FF:000002">
    <property type="entry name" value="Crossover junction endodeoxyribonuclease RuvC"/>
    <property type="match status" value="1"/>
</dbReference>
<dbReference type="Gene3D" id="3.30.420.10">
    <property type="entry name" value="Ribonuclease H-like superfamily/Ribonuclease H"/>
    <property type="match status" value="1"/>
</dbReference>
<dbReference type="HAMAP" id="MF_00034">
    <property type="entry name" value="RuvC"/>
    <property type="match status" value="1"/>
</dbReference>
<dbReference type="InterPro" id="IPR012337">
    <property type="entry name" value="RNaseH-like_sf"/>
</dbReference>
<dbReference type="InterPro" id="IPR036397">
    <property type="entry name" value="RNaseH_sf"/>
</dbReference>
<dbReference type="InterPro" id="IPR020563">
    <property type="entry name" value="X-over_junc_endoDNase_Mg_BS"/>
</dbReference>
<dbReference type="InterPro" id="IPR002176">
    <property type="entry name" value="X-over_junc_endoDNase_RuvC"/>
</dbReference>
<dbReference type="NCBIfam" id="NF000711">
    <property type="entry name" value="PRK00039.2-1"/>
    <property type="match status" value="1"/>
</dbReference>
<dbReference type="NCBIfam" id="TIGR00228">
    <property type="entry name" value="ruvC"/>
    <property type="match status" value="1"/>
</dbReference>
<dbReference type="PANTHER" id="PTHR30194">
    <property type="entry name" value="CROSSOVER JUNCTION ENDODEOXYRIBONUCLEASE RUVC"/>
    <property type="match status" value="1"/>
</dbReference>
<dbReference type="PANTHER" id="PTHR30194:SF3">
    <property type="entry name" value="CROSSOVER JUNCTION ENDODEOXYRIBONUCLEASE RUVC"/>
    <property type="match status" value="1"/>
</dbReference>
<dbReference type="Pfam" id="PF02075">
    <property type="entry name" value="RuvC"/>
    <property type="match status" value="1"/>
</dbReference>
<dbReference type="PRINTS" id="PR00696">
    <property type="entry name" value="RSOLVASERUVC"/>
</dbReference>
<dbReference type="SUPFAM" id="SSF53098">
    <property type="entry name" value="Ribonuclease H-like"/>
    <property type="match status" value="1"/>
</dbReference>
<dbReference type="PROSITE" id="PS01321">
    <property type="entry name" value="RUVC"/>
    <property type="match status" value="1"/>
</dbReference>
<feature type="chain" id="PRO_1000202044" description="Crossover junction endodeoxyribonuclease RuvC">
    <location>
        <begin position="1"/>
        <end position="173"/>
    </location>
</feature>
<feature type="active site" evidence="1">
    <location>
        <position position="8"/>
    </location>
</feature>
<feature type="active site" evidence="1">
    <location>
        <position position="67"/>
    </location>
</feature>
<feature type="active site" evidence="1">
    <location>
        <position position="139"/>
    </location>
</feature>
<feature type="binding site" evidence="1">
    <location>
        <position position="8"/>
    </location>
    <ligand>
        <name>Mg(2+)</name>
        <dbReference type="ChEBI" id="CHEBI:18420"/>
        <label>1</label>
    </ligand>
</feature>
<feature type="binding site" evidence="1">
    <location>
        <position position="67"/>
    </location>
    <ligand>
        <name>Mg(2+)</name>
        <dbReference type="ChEBI" id="CHEBI:18420"/>
        <label>2</label>
    </ligand>
</feature>
<feature type="binding site" evidence="1">
    <location>
        <position position="139"/>
    </location>
    <ligand>
        <name>Mg(2+)</name>
        <dbReference type="ChEBI" id="CHEBI:18420"/>
        <label>1</label>
    </ligand>
</feature>
<protein>
    <recommendedName>
        <fullName evidence="1">Crossover junction endodeoxyribonuclease RuvC</fullName>
        <ecNumber evidence="1">3.1.21.10</ecNumber>
    </recommendedName>
    <alternativeName>
        <fullName evidence="1">Holliday junction nuclease RuvC</fullName>
    </alternativeName>
    <alternativeName>
        <fullName evidence="1">Holliday junction resolvase RuvC</fullName>
    </alternativeName>
</protein>
<proteinExistence type="inferred from homology"/>
<name>RUVC_TOLAT</name>
<accession>C4LBN2</accession>
<sequence>MTIILGIDPGSRITGYGVIRQQAGKVEYLGSGCIRTSGEQLSDKLKQIYDGISEIILQFKPDLFAIEQVFMAKNPDSALKLGQARGSAIVAAVNAGLPVAEYAARQVKQSVVGTGAADKEQVQHMVKQLLKLPACPQADAADALAVALCHSHTQQTLIRMAGKVHGTARGRLR</sequence>
<keyword id="KW-0963">Cytoplasm</keyword>
<keyword id="KW-0227">DNA damage</keyword>
<keyword id="KW-0233">DNA recombination</keyword>
<keyword id="KW-0234">DNA repair</keyword>
<keyword id="KW-0238">DNA-binding</keyword>
<keyword id="KW-0255">Endonuclease</keyword>
<keyword id="KW-0378">Hydrolase</keyword>
<keyword id="KW-0460">Magnesium</keyword>
<keyword id="KW-0479">Metal-binding</keyword>
<keyword id="KW-0540">Nuclease</keyword>
<keyword id="KW-1185">Reference proteome</keyword>
<gene>
    <name evidence="1" type="primary">ruvC</name>
    <name type="ordered locus">Tola_2713</name>
</gene>
<evidence type="ECO:0000255" key="1">
    <source>
        <dbReference type="HAMAP-Rule" id="MF_00034"/>
    </source>
</evidence>
<comment type="function">
    <text evidence="1">The RuvA-RuvB-RuvC complex processes Holliday junction (HJ) DNA during genetic recombination and DNA repair. Endonuclease that resolves HJ intermediates. Cleaves cruciform DNA by making single-stranded nicks across the HJ at symmetrical positions within the homologous arms, yielding a 5'-phosphate and a 3'-hydroxyl group; requires a central core of homology in the junction. The consensus cleavage sequence is 5'-(A/T)TT(C/G)-3'. Cleavage occurs on the 3'-side of the TT dinucleotide at the point of strand exchange. HJ branch migration catalyzed by RuvA-RuvB allows RuvC to scan DNA until it finds its consensus sequence, where it cleaves and resolves the cruciform DNA.</text>
</comment>
<comment type="catalytic activity">
    <reaction evidence="1">
        <text>Endonucleolytic cleavage at a junction such as a reciprocal single-stranded crossover between two homologous DNA duplexes (Holliday junction).</text>
        <dbReference type="EC" id="3.1.21.10"/>
    </reaction>
</comment>
<comment type="cofactor">
    <cofactor evidence="1">
        <name>Mg(2+)</name>
        <dbReference type="ChEBI" id="CHEBI:18420"/>
    </cofactor>
    <text evidence="1">Binds 2 Mg(2+) ion per subunit.</text>
</comment>
<comment type="subunit">
    <text evidence="1">Homodimer which binds Holliday junction (HJ) DNA. The HJ becomes 2-fold symmetrical on binding to RuvC with unstacked arms; it has a different conformation from HJ DNA in complex with RuvA. In the full resolvosome a probable DNA-RuvA(4)-RuvB(12)-RuvC(2) complex forms which resolves the HJ.</text>
</comment>
<comment type="subcellular location">
    <subcellularLocation>
        <location evidence="1">Cytoplasm</location>
    </subcellularLocation>
</comment>
<comment type="similarity">
    <text evidence="1">Belongs to the RuvC family.</text>
</comment>
<organism>
    <name type="scientific">Tolumonas auensis (strain DSM 9187 / NBRC 110442 / TA 4)</name>
    <dbReference type="NCBI Taxonomy" id="595494"/>
    <lineage>
        <taxon>Bacteria</taxon>
        <taxon>Pseudomonadati</taxon>
        <taxon>Pseudomonadota</taxon>
        <taxon>Gammaproteobacteria</taxon>
        <taxon>Aeromonadales</taxon>
        <taxon>Aeromonadaceae</taxon>
        <taxon>Tolumonas</taxon>
    </lineage>
</organism>
<reference key="1">
    <citation type="submission" date="2009-05" db="EMBL/GenBank/DDBJ databases">
        <title>Complete sequence of Tolumonas auensis DSM 9187.</title>
        <authorList>
            <consortium name="US DOE Joint Genome Institute"/>
            <person name="Lucas S."/>
            <person name="Copeland A."/>
            <person name="Lapidus A."/>
            <person name="Glavina del Rio T."/>
            <person name="Tice H."/>
            <person name="Bruce D."/>
            <person name="Goodwin L."/>
            <person name="Pitluck S."/>
            <person name="Chertkov O."/>
            <person name="Brettin T."/>
            <person name="Detter J.C."/>
            <person name="Han C."/>
            <person name="Larimer F."/>
            <person name="Land M."/>
            <person name="Hauser L."/>
            <person name="Kyrpides N."/>
            <person name="Mikhailova N."/>
            <person name="Spring S."/>
            <person name="Beller H."/>
        </authorList>
    </citation>
    <scope>NUCLEOTIDE SEQUENCE [LARGE SCALE GENOMIC DNA]</scope>
    <source>
        <strain>DSM 9187 / NBRC 110442 / TA 4</strain>
    </source>
</reference>